<gene>
    <name evidence="1" type="primary">rnpA</name>
    <name type="ordered locus">Sca_0002</name>
</gene>
<accession>B9DI94</accession>
<organism>
    <name type="scientific">Staphylococcus carnosus (strain TM300)</name>
    <dbReference type="NCBI Taxonomy" id="396513"/>
    <lineage>
        <taxon>Bacteria</taxon>
        <taxon>Bacillati</taxon>
        <taxon>Bacillota</taxon>
        <taxon>Bacilli</taxon>
        <taxon>Bacillales</taxon>
        <taxon>Staphylococcaceae</taxon>
        <taxon>Staphylococcus</taxon>
    </lineage>
</organism>
<dbReference type="EC" id="3.1.26.5" evidence="1"/>
<dbReference type="EMBL" id="AM295250">
    <property type="protein sequence ID" value="CAL26917.1"/>
    <property type="molecule type" value="Genomic_DNA"/>
</dbReference>
<dbReference type="RefSeq" id="WP_012664032.1">
    <property type="nucleotide sequence ID" value="NC_012121.1"/>
</dbReference>
<dbReference type="SMR" id="B9DI94"/>
<dbReference type="GeneID" id="93794918"/>
<dbReference type="KEGG" id="sca:SCA_0002"/>
<dbReference type="eggNOG" id="COG0594">
    <property type="taxonomic scope" value="Bacteria"/>
</dbReference>
<dbReference type="HOGENOM" id="CLU_117179_9_1_9"/>
<dbReference type="OrthoDB" id="9810867at2"/>
<dbReference type="BioCyc" id="SCAR396513:SCA_RS00010-MONOMER"/>
<dbReference type="Proteomes" id="UP000000444">
    <property type="component" value="Chromosome"/>
</dbReference>
<dbReference type="GO" id="GO:0030677">
    <property type="term" value="C:ribonuclease P complex"/>
    <property type="evidence" value="ECO:0007669"/>
    <property type="project" value="TreeGrafter"/>
</dbReference>
<dbReference type="GO" id="GO:0042781">
    <property type="term" value="F:3'-tRNA processing endoribonuclease activity"/>
    <property type="evidence" value="ECO:0007669"/>
    <property type="project" value="TreeGrafter"/>
</dbReference>
<dbReference type="GO" id="GO:0004526">
    <property type="term" value="F:ribonuclease P activity"/>
    <property type="evidence" value="ECO:0007669"/>
    <property type="project" value="UniProtKB-UniRule"/>
</dbReference>
<dbReference type="GO" id="GO:0000049">
    <property type="term" value="F:tRNA binding"/>
    <property type="evidence" value="ECO:0007669"/>
    <property type="project" value="UniProtKB-UniRule"/>
</dbReference>
<dbReference type="GO" id="GO:0001682">
    <property type="term" value="P:tRNA 5'-leader removal"/>
    <property type="evidence" value="ECO:0007669"/>
    <property type="project" value="UniProtKB-UniRule"/>
</dbReference>
<dbReference type="FunFam" id="3.30.230.10:FF:000021">
    <property type="entry name" value="Ribonuclease P protein component"/>
    <property type="match status" value="1"/>
</dbReference>
<dbReference type="Gene3D" id="3.30.230.10">
    <property type="match status" value="1"/>
</dbReference>
<dbReference type="HAMAP" id="MF_00227">
    <property type="entry name" value="RNase_P"/>
    <property type="match status" value="1"/>
</dbReference>
<dbReference type="InterPro" id="IPR020568">
    <property type="entry name" value="Ribosomal_Su5_D2-typ_SF"/>
</dbReference>
<dbReference type="InterPro" id="IPR014721">
    <property type="entry name" value="Ribsml_uS5_D2-typ_fold_subgr"/>
</dbReference>
<dbReference type="InterPro" id="IPR000100">
    <property type="entry name" value="RNase_P"/>
</dbReference>
<dbReference type="InterPro" id="IPR020539">
    <property type="entry name" value="RNase_P_CS"/>
</dbReference>
<dbReference type="NCBIfam" id="TIGR00188">
    <property type="entry name" value="rnpA"/>
    <property type="match status" value="1"/>
</dbReference>
<dbReference type="PANTHER" id="PTHR33992">
    <property type="entry name" value="RIBONUCLEASE P PROTEIN COMPONENT"/>
    <property type="match status" value="1"/>
</dbReference>
<dbReference type="PANTHER" id="PTHR33992:SF1">
    <property type="entry name" value="RIBONUCLEASE P PROTEIN COMPONENT"/>
    <property type="match status" value="1"/>
</dbReference>
<dbReference type="Pfam" id="PF00825">
    <property type="entry name" value="Ribonuclease_P"/>
    <property type="match status" value="1"/>
</dbReference>
<dbReference type="SUPFAM" id="SSF54211">
    <property type="entry name" value="Ribosomal protein S5 domain 2-like"/>
    <property type="match status" value="1"/>
</dbReference>
<dbReference type="PROSITE" id="PS00648">
    <property type="entry name" value="RIBONUCLEASE_P"/>
    <property type="match status" value="1"/>
</dbReference>
<keyword id="KW-0255">Endonuclease</keyword>
<keyword id="KW-0378">Hydrolase</keyword>
<keyword id="KW-0540">Nuclease</keyword>
<keyword id="KW-1185">Reference proteome</keyword>
<keyword id="KW-0694">RNA-binding</keyword>
<keyword id="KW-0819">tRNA processing</keyword>
<feature type="chain" id="PRO_1000194672" description="Ribonuclease P protein component">
    <location>
        <begin position="1"/>
        <end position="115"/>
    </location>
</feature>
<protein>
    <recommendedName>
        <fullName evidence="1">Ribonuclease P protein component</fullName>
        <shortName evidence="1">RNase P protein</shortName>
        <shortName evidence="1">RNaseP protein</shortName>
        <ecNumber evidence="1">3.1.26.5</ecNumber>
    </recommendedName>
    <alternativeName>
        <fullName evidence="1">Protein C5</fullName>
    </alternativeName>
</protein>
<evidence type="ECO:0000255" key="1">
    <source>
        <dbReference type="HAMAP-Rule" id="MF_00227"/>
    </source>
</evidence>
<comment type="function">
    <text evidence="1">RNaseP catalyzes the removal of the 5'-leader sequence from pre-tRNA to produce the mature 5'-terminus. It can also cleave other RNA substrates such as 4.5S RNA. The protein component plays an auxiliary but essential role in vivo by binding to the 5'-leader sequence and broadening the substrate specificity of the ribozyme.</text>
</comment>
<comment type="catalytic activity">
    <reaction evidence="1">
        <text>Endonucleolytic cleavage of RNA, removing 5'-extranucleotides from tRNA precursor.</text>
        <dbReference type="EC" id="3.1.26.5"/>
    </reaction>
</comment>
<comment type="subunit">
    <text evidence="1">Consists of a catalytic RNA component (M1 or rnpB) and a protein subunit.</text>
</comment>
<comment type="similarity">
    <text evidence="1">Belongs to the RnpA family.</text>
</comment>
<reference key="1">
    <citation type="journal article" date="2009" name="Appl. Environ. Microbiol.">
        <title>Genome analysis of the meat starter culture bacterium Staphylococcus carnosus TM300.</title>
        <authorList>
            <person name="Rosenstein R."/>
            <person name="Nerz C."/>
            <person name="Biswas L."/>
            <person name="Resch A."/>
            <person name="Raddatz G."/>
            <person name="Schuster S.C."/>
            <person name="Goetz F."/>
        </authorList>
    </citation>
    <scope>NUCLEOTIDE SEQUENCE [LARGE SCALE GENOMIC DNA]</scope>
    <source>
        <strain>TM300</strain>
    </source>
</reference>
<proteinExistence type="inferred from homology"/>
<name>RNPA_STACT</name>
<sequence>MEKAYRIKKNSDFQAIYRRGKSVANRQFVIYMMPDKGLTHFKLGISVSKKLGNAVTRNRIKRAIRENFKVHKDDMLPRNIIVIARHPAKDMTVLEIQKSLEHVLKVAKLFNKRIK</sequence>